<reference key="1">
    <citation type="journal article" date="2003" name="Lancet">
        <title>Genome sequence of Vibrio parahaemolyticus: a pathogenic mechanism distinct from that of V. cholerae.</title>
        <authorList>
            <person name="Makino K."/>
            <person name="Oshima K."/>
            <person name="Kurokawa K."/>
            <person name="Yokoyama K."/>
            <person name="Uda T."/>
            <person name="Tagomori K."/>
            <person name="Iijima Y."/>
            <person name="Najima M."/>
            <person name="Nakano M."/>
            <person name="Yamashita A."/>
            <person name="Kubota Y."/>
            <person name="Kimura S."/>
            <person name="Yasunaga T."/>
            <person name="Honda T."/>
            <person name="Shinagawa H."/>
            <person name="Hattori M."/>
            <person name="Iida T."/>
        </authorList>
    </citation>
    <scope>NUCLEOTIDE SEQUENCE [LARGE SCALE GENOMIC DNA]</scope>
    <source>
        <strain>RIMD 2210633</strain>
    </source>
</reference>
<keyword id="KW-0378">Hydrolase</keyword>
<keyword id="KW-0479">Metal-binding</keyword>
<keyword id="KW-0546">Nucleotide metabolism</keyword>
<keyword id="KW-0862">Zinc</keyword>
<dbReference type="EC" id="3.5.4.2" evidence="1"/>
<dbReference type="EMBL" id="BA000032">
    <property type="protein sequence ID" value="BAC62635.1"/>
    <property type="molecule type" value="Genomic_DNA"/>
</dbReference>
<dbReference type="RefSeq" id="NP_800802.1">
    <property type="nucleotide sequence ID" value="NC_004605.1"/>
</dbReference>
<dbReference type="RefSeq" id="WP_005477206.1">
    <property type="nucleotide sequence ID" value="NC_004605.1"/>
</dbReference>
<dbReference type="SMR" id="Q87GM3"/>
<dbReference type="GeneID" id="1191988"/>
<dbReference type="KEGG" id="vpa:VPA1292"/>
<dbReference type="PATRIC" id="fig|223926.6.peg.4218"/>
<dbReference type="eggNOG" id="COG1816">
    <property type="taxonomic scope" value="Bacteria"/>
</dbReference>
<dbReference type="HOGENOM" id="CLU_039228_7_0_6"/>
<dbReference type="Proteomes" id="UP000002493">
    <property type="component" value="Chromosome 2"/>
</dbReference>
<dbReference type="GO" id="GO:0005829">
    <property type="term" value="C:cytosol"/>
    <property type="evidence" value="ECO:0007669"/>
    <property type="project" value="TreeGrafter"/>
</dbReference>
<dbReference type="GO" id="GO:0000034">
    <property type="term" value="F:adenine deaminase activity"/>
    <property type="evidence" value="ECO:0007669"/>
    <property type="project" value="UniProtKB-UniRule"/>
</dbReference>
<dbReference type="GO" id="GO:0008270">
    <property type="term" value="F:zinc ion binding"/>
    <property type="evidence" value="ECO:0007669"/>
    <property type="project" value="UniProtKB-UniRule"/>
</dbReference>
<dbReference type="GO" id="GO:0006146">
    <property type="term" value="P:adenine catabolic process"/>
    <property type="evidence" value="ECO:0007669"/>
    <property type="project" value="UniProtKB-UniRule"/>
</dbReference>
<dbReference type="GO" id="GO:0043103">
    <property type="term" value="P:hypoxanthine salvage"/>
    <property type="evidence" value="ECO:0007669"/>
    <property type="project" value="UniProtKB-UniRule"/>
</dbReference>
<dbReference type="GO" id="GO:0009117">
    <property type="term" value="P:nucleotide metabolic process"/>
    <property type="evidence" value="ECO:0007669"/>
    <property type="project" value="UniProtKB-KW"/>
</dbReference>
<dbReference type="CDD" id="cd01320">
    <property type="entry name" value="ADA"/>
    <property type="match status" value="1"/>
</dbReference>
<dbReference type="FunFam" id="3.20.20.140:FF:000039">
    <property type="entry name" value="Adenine deaminase"/>
    <property type="match status" value="1"/>
</dbReference>
<dbReference type="Gene3D" id="3.20.20.140">
    <property type="entry name" value="Metal-dependent hydrolases"/>
    <property type="match status" value="1"/>
</dbReference>
<dbReference type="HAMAP" id="MF_01962">
    <property type="entry name" value="Adenine_deaminase"/>
    <property type="match status" value="1"/>
</dbReference>
<dbReference type="InterPro" id="IPR001365">
    <property type="entry name" value="A_deaminase_dom"/>
</dbReference>
<dbReference type="InterPro" id="IPR028892">
    <property type="entry name" value="ADE"/>
</dbReference>
<dbReference type="InterPro" id="IPR006330">
    <property type="entry name" value="Ado/ade_deaminase"/>
</dbReference>
<dbReference type="InterPro" id="IPR032466">
    <property type="entry name" value="Metal_Hydrolase"/>
</dbReference>
<dbReference type="NCBIfam" id="TIGR01430">
    <property type="entry name" value="aden_deam"/>
    <property type="match status" value="1"/>
</dbReference>
<dbReference type="NCBIfam" id="NF006850">
    <property type="entry name" value="PRK09358.1-6"/>
    <property type="match status" value="1"/>
</dbReference>
<dbReference type="PANTHER" id="PTHR43114">
    <property type="entry name" value="ADENINE DEAMINASE"/>
    <property type="match status" value="1"/>
</dbReference>
<dbReference type="PANTHER" id="PTHR43114:SF6">
    <property type="entry name" value="ADENINE DEAMINASE"/>
    <property type="match status" value="1"/>
</dbReference>
<dbReference type="Pfam" id="PF00962">
    <property type="entry name" value="A_deaminase"/>
    <property type="match status" value="1"/>
</dbReference>
<dbReference type="SUPFAM" id="SSF51556">
    <property type="entry name" value="Metallo-dependent hydrolases"/>
    <property type="match status" value="1"/>
</dbReference>
<protein>
    <recommendedName>
        <fullName evidence="1">Adenine deaminase</fullName>
        <shortName evidence="1">ADE</shortName>
        <ecNumber evidence="1">3.5.4.2</ecNumber>
    </recommendedName>
    <alternativeName>
        <fullName evidence="1">Adenine aminohydrolase</fullName>
        <shortName evidence="1">AAH</shortName>
    </alternativeName>
</protein>
<name>ADE_VIBPA</name>
<sequence length="337" mass="37998">MNAFIQGLPKVELHLHIEGSLEPELMFKLAKRNGIDIPYSSPSELREAYQFEDLQSFLDLYYQGANVLRTEQDFYDLTWEYLEHCKADNVIHTEIFFDPQTHTERGIDFDTVLNGISRALTDGREKLGITSQIIACFLRHLSEESAMETLQSVLKHRDKIIGVGLDSSEKGHPPAKFLRVFQQAKEAGLLTVAHAGEEGPAQNITDAIEMLEVSRVDHGVRCVEDEALVGSLIETKMPLTVCPLSNIKLCVFDEMGQHNIVELLRKGVAVTINSDDPVYFGGYMTDNFLAVNQAHPMIKEELAKFTLNAIDASFIDNELKAQYRHKVEQYVAQHSSM</sequence>
<gene>
    <name type="ordered locus">VPA1292</name>
</gene>
<accession>Q87GM3</accession>
<evidence type="ECO:0000255" key="1">
    <source>
        <dbReference type="HAMAP-Rule" id="MF_01962"/>
    </source>
</evidence>
<comment type="function">
    <text evidence="1">Catalyzes the hydrolytic deamination of adenine to hypoxanthine. Plays an important role in the purine salvage pathway and in nitrogen catabolism.</text>
</comment>
<comment type="catalytic activity">
    <reaction evidence="1">
        <text>adenine + H2O + H(+) = hypoxanthine + NH4(+)</text>
        <dbReference type="Rhea" id="RHEA:23688"/>
        <dbReference type="ChEBI" id="CHEBI:15377"/>
        <dbReference type="ChEBI" id="CHEBI:15378"/>
        <dbReference type="ChEBI" id="CHEBI:16708"/>
        <dbReference type="ChEBI" id="CHEBI:17368"/>
        <dbReference type="ChEBI" id="CHEBI:28938"/>
        <dbReference type="EC" id="3.5.4.2"/>
    </reaction>
</comment>
<comment type="cofactor">
    <cofactor evidence="1">
        <name>Zn(2+)</name>
        <dbReference type="ChEBI" id="CHEBI:29105"/>
    </cofactor>
    <text evidence="1">Binds 1 zinc ion per subunit.</text>
</comment>
<comment type="similarity">
    <text evidence="1">Belongs to the metallo-dependent hydrolases superfamily. Adenosine and AMP deaminases family. Adenine deaminase type 2 subfamily.</text>
</comment>
<organism>
    <name type="scientific">Vibrio parahaemolyticus serotype O3:K6 (strain RIMD 2210633)</name>
    <dbReference type="NCBI Taxonomy" id="223926"/>
    <lineage>
        <taxon>Bacteria</taxon>
        <taxon>Pseudomonadati</taxon>
        <taxon>Pseudomonadota</taxon>
        <taxon>Gammaproteobacteria</taxon>
        <taxon>Vibrionales</taxon>
        <taxon>Vibrionaceae</taxon>
        <taxon>Vibrio</taxon>
    </lineage>
</organism>
<proteinExistence type="inferred from homology"/>
<feature type="chain" id="PRO_0000194399" description="Adenine deaminase">
    <location>
        <begin position="1"/>
        <end position="337"/>
    </location>
</feature>
<feature type="active site" description="Proton donor" evidence="1">
    <location>
        <position position="197"/>
    </location>
</feature>
<feature type="binding site" evidence="1">
    <location>
        <position position="14"/>
    </location>
    <ligand>
        <name>Zn(2+)</name>
        <dbReference type="ChEBI" id="CHEBI:29105"/>
        <note>catalytic</note>
    </ligand>
</feature>
<feature type="binding site" evidence="1">
    <location>
        <position position="16"/>
    </location>
    <ligand>
        <name>Zn(2+)</name>
        <dbReference type="ChEBI" id="CHEBI:29105"/>
        <note>catalytic</note>
    </ligand>
</feature>
<feature type="binding site" evidence="1">
    <location>
        <position position="194"/>
    </location>
    <ligand>
        <name>Zn(2+)</name>
        <dbReference type="ChEBI" id="CHEBI:29105"/>
        <note>catalytic</note>
    </ligand>
</feature>
<feature type="binding site" evidence="1">
    <location>
        <position position="275"/>
    </location>
    <ligand>
        <name>Zn(2+)</name>
        <dbReference type="ChEBI" id="CHEBI:29105"/>
        <note>catalytic</note>
    </ligand>
</feature>
<feature type="binding site" evidence="1">
    <location>
        <position position="276"/>
    </location>
    <ligand>
        <name>substrate</name>
    </ligand>
</feature>
<feature type="site" description="Important for catalytic activity" evidence="1">
    <location>
        <position position="218"/>
    </location>
</feature>